<dbReference type="EMBL" id="CP000802">
    <property type="protein sequence ID" value="ABV08555.1"/>
    <property type="molecule type" value="Genomic_DNA"/>
</dbReference>
<dbReference type="RefSeq" id="WP_000208757.1">
    <property type="nucleotide sequence ID" value="NC_009800.1"/>
</dbReference>
<dbReference type="SMR" id="A8A7Q1"/>
<dbReference type="GeneID" id="93777670"/>
<dbReference type="KEGG" id="ecx:EcHS_A4396"/>
<dbReference type="HOGENOM" id="CLU_156492_0_0_6"/>
<dbReference type="GO" id="GO:0045283">
    <property type="term" value="C:fumarate reductase complex"/>
    <property type="evidence" value="ECO:0007669"/>
    <property type="project" value="UniProtKB-UniRule"/>
</dbReference>
<dbReference type="GO" id="GO:0005886">
    <property type="term" value="C:plasma membrane"/>
    <property type="evidence" value="ECO:0007669"/>
    <property type="project" value="UniProtKB-SubCell"/>
</dbReference>
<dbReference type="GO" id="GO:0000104">
    <property type="term" value="F:succinate dehydrogenase activity"/>
    <property type="evidence" value="ECO:0007669"/>
    <property type="project" value="UniProtKB-UniRule"/>
</dbReference>
<dbReference type="CDD" id="cd00546">
    <property type="entry name" value="QFR_TypeD_subunitC"/>
    <property type="match status" value="1"/>
</dbReference>
<dbReference type="FunFam" id="1.20.1300.10:FF:000003">
    <property type="entry name" value="Fumarate reductase subunit C"/>
    <property type="match status" value="1"/>
</dbReference>
<dbReference type="Gene3D" id="1.20.1300.10">
    <property type="entry name" value="Fumarate reductase/succinate dehydrogenase, transmembrane subunit"/>
    <property type="match status" value="1"/>
</dbReference>
<dbReference type="HAMAP" id="MF_00708">
    <property type="entry name" value="Fumarate_red_C"/>
    <property type="match status" value="1"/>
</dbReference>
<dbReference type="InterPro" id="IPR003510">
    <property type="entry name" value="Fumarate_red_C"/>
</dbReference>
<dbReference type="InterPro" id="IPR034804">
    <property type="entry name" value="SQR/QFR_C/D"/>
</dbReference>
<dbReference type="NCBIfam" id="NF003445">
    <property type="entry name" value="PRK04987.1"/>
    <property type="match status" value="1"/>
</dbReference>
<dbReference type="Pfam" id="PF02300">
    <property type="entry name" value="Fumarate_red_C"/>
    <property type="match status" value="1"/>
</dbReference>
<dbReference type="PIRSF" id="PIRSF000180">
    <property type="entry name" value="FrdC"/>
    <property type="match status" value="1"/>
</dbReference>
<dbReference type="SUPFAM" id="SSF81343">
    <property type="entry name" value="Fumarate reductase respiratory complex transmembrane subunits"/>
    <property type="match status" value="1"/>
</dbReference>
<sequence length="131" mass="15015">MTTKRKPYVRPMTSTWWKKLPFYRFYMLREGTAVPAVWFSIELIFGLFALKNGPEAWAGFVDFLQNPVIVIINLITLAAALLHTKTWFELAPKAANIIVKDEKMGPEPIIKSLWAVTVVATIVILFVALYW</sequence>
<proteinExistence type="inferred from homology"/>
<evidence type="ECO:0000255" key="1">
    <source>
        <dbReference type="HAMAP-Rule" id="MF_00708"/>
    </source>
</evidence>
<keyword id="KW-0997">Cell inner membrane</keyword>
<keyword id="KW-1003">Cell membrane</keyword>
<keyword id="KW-0472">Membrane</keyword>
<keyword id="KW-0812">Transmembrane</keyword>
<keyword id="KW-1133">Transmembrane helix</keyword>
<organism>
    <name type="scientific">Escherichia coli O9:H4 (strain HS)</name>
    <dbReference type="NCBI Taxonomy" id="331112"/>
    <lineage>
        <taxon>Bacteria</taxon>
        <taxon>Pseudomonadati</taxon>
        <taxon>Pseudomonadota</taxon>
        <taxon>Gammaproteobacteria</taxon>
        <taxon>Enterobacterales</taxon>
        <taxon>Enterobacteriaceae</taxon>
        <taxon>Escherichia</taxon>
    </lineage>
</organism>
<reference key="1">
    <citation type="journal article" date="2008" name="J. Bacteriol.">
        <title>The pangenome structure of Escherichia coli: comparative genomic analysis of E. coli commensal and pathogenic isolates.</title>
        <authorList>
            <person name="Rasko D.A."/>
            <person name="Rosovitz M.J."/>
            <person name="Myers G.S.A."/>
            <person name="Mongodin E.F."/>
            <person name="Fricke W.F."/>
            <person name="Gajer P."/>
            <person name="Crabtree J."/>
            <person name="Sebaihia M."/>
            <person name="Thomson N.R."/>
            <person name="Chaudhuri R."/>
            <person name="Henderson I.R."/>
            <person name="Sperandio V."/>
            <person name="Ravel J."/>
        </authorList>
    </citation>
    <scope>NUCLEOTIDE SEQUENCE [LARGE SCALE GENOMIC DNA]</scope>
    <source>
        <strain>HS</strain>
    </source>
</reference>
<feature type="chain" id="PRO_1000062064" description="Fumarate reductase subunit C">
    <location>
        <begin position="1"/>
        <end position="131"/>
    </location>
</feature>
<feature type="transmembrane region" description="Helical" evidence="1">
    <location>
        <begin position="30"/>
        <end position="50"/>
    </location>
</feature>
<feature type="transmembrane region" description="Helical" evidence="1">
    <location>
        <begin position="63"/>
        <end position="83"/>
    </location>
</feature>
<feature type="transmembrane region" description="Helical" evidence="1">
    <location>
        <begin position="109"/>
        <end position="129"/>
    </location>
</feature>
<accession>A8A7Q1</accession>
<gene>
    <name evidence="1" type="primary">frdC</name>
    <name type="ordered locus">EcHS_A4396</name>
</gene>
<comment type="function">
    <text evidence="1">Two distinct, membrane-bound, FAD-containing enzymes are responsible for the catalysis of fumarate and succinate interconversion; fumarate reductase is used in anaerobic growth, and succinate dehydrogenase is used in aerobic growth. Anchors the catalytic components of the fumarate reductase complex to the cell inner membrane, binds quinones.</text>
</comment>
<comment type="subunit">
    <text evidence="1">Part of an enzyme complex containing four subunits: a flavoprotein (FrdA), an iron-sulfur protein (FrdB), and two hydrophobic anchor proteins (FrdC and FrdD).</text>
</comment>
<comment type="subcellular location">
    <subcellularLocation>
        <location evidence="1">Cell inner membrane</location>
        <topology evidence="1">Multi-pass membrane protein</topology>
    </subcellularLocation>
</comment>
<comment type="similarity">
    <text evidence="1">Belongs to the FrdC family.</text>
</comment>
<protein>
    <recommendedName>
        <fullName evidence="1">Fumarate reductase subunit C</fullName>
    </recommendedName>
    <alternativeName>
        <fullName evidence="1">Fumarate reductase 15 kDa hydrophobic protein</fullName>
    </alternativeName>
    <alternativeName>
        <fullName evidence="1">Quinol-fumarate reductase subunit C</fullName>
        <shortName evidence="1">QFR subunit C</shortName>
    </alternativeName>
</protein>
<name>FRDC_ECOHS</name>